<comment type="similarity">
    <text evidence="1">Belongs to the universal ribosomal protein uS2 family.</text>
</comment>
<dbReference type="EMBL" id="CP001358">
    <property type="protein sequence ID" value="ACL48260.1"/>
    <property type="molecule type" value="Genomic_DNA"/>
</dbReference>
<dbReference type="SMR" id="B8J3M5"/>
<dbReference type="STRING" id="525146.Ddes_0346"/>
<dbReference type="KEGG" id="dds:Ddes_0346"/>
<dbReference type="eggNOG" id="COG0052">
    <property type="taxonomic scope" value="Bacteria"/>
</dbReference>
<dbReference type="HOGENOM" id="CLU_040318_1_2_7"/>
<dbReference type="GO" id="GO:0022627">
    <property type="term" value="C:cytosolic small ribosomal subunit"/>
    <property type="evidence" value="ECO:0007669"/>
    <property type="project" value="TreeGrafter"/>
</dbReference>
<dbReference type="GO" id="GO:0003735">
    <property type="term" value="F:structural constituent of ribosome"/>
    <property type="evidence" value="ECO:0007669"/>
    <property type="project" value="InterPro"/>
</dbReference>
<dbReference type="GO" id="GO:0006412">
    <property type="term" value="P:translation"/>
    <property type="evidence" value="ECO:0007669"/>
    <property type="project" value="UniProtKB-UniRule"/>
</dbReference>
<dbReference type="CDD" id="cd01425">
    <property type="entry name" value="RPS2"/>
    <property type="match status" value="1"/>
</dbReference>
<dbReference type="FunFam" id="1.10.287.610:FF:000001">
    <property type="entry name" value="30S ribosomal protein S2"/>
    <property type="match status" value="1"/>
</dbReference>
<dbReference type="Gene3D" id="3.40.50.10490">
    <property type="entry name" value="Glucose-6-phosphate isomerase like protein, domain 1"/>
    <property type="match status" value="1"/>
</dbReference>
<dbReference type="Gene3D" id="1.10.287.610">
    <property type="entry name" value="Helix hairpin bin"/>
    <property type="match status" value="1"/>
</dbReference>
<dbReference type="HAMAP" id="MF_00291_B">
    <property type="entry name" value="Ribosomal_uS2_B"/>
    <property type="match status" value="1"/>
</dbReference>
<dbReference type="InterPro" id="IPR001865">
    <property type="entry name" value="Ribosomal_uS2"/>
</dbReference>
<dbReference type="InterPro" id="IPR005706">
    <property type="entry name" value="Ribosomal_uS2_bac/mit/plastid"/>
</dbReference>
<dbReference type="InterPro" id="IPR018130">
    <property type="entry name" value="Ribosomal_uS2_CS"/>
</dbReference>
<dbReference type="InterPro" id="IPR023591">
    <property type="entry name" value="Ribosomal_uS2_flav_dom_sf"/>
</dbReference>
<dbReference type="NCBIfam" id="TIGR01011">
    <property type="entry name" value="rpsB_bact"/>
    <property type="match status" value="1"/>
</dbReference>
<dbReference type="PANTHER" id="PTHR12534">
    <property type="entry name" value="30S RIBOSOMAL PROTEIN S2 PROKARYOTIC AND ORGANELLAR"/>
    <property type="match status" value="1"/>
</dbReference>
<dbReference type="PANTHER" id="PTHR12534:SF0">
    <property type="entry name" value="SMALL RIBOSOMAL SUBUNIT PROTEIN US2M"/>
    <property type="match status" value="1"/>
</dbReference>
<dbReference type="Pfam" id="PF00318">
    <property type="entry name" value="Ribosomal_S2"/>
    <property type="match status" value="1"/>
</dbReference>
<dbReference type="PRINTS" id="PR00395">
    <property type="entry name" value="RIBOSOMALS2"/>
</dbReference>
<dbReference type="SUPFAM" id="SSF52313">
    <property type="entry name" value="Ribosomal protein S2"/>
    <property type="match status" value="1"/>
</dbReference>
<dbReference type="PROSITE" id="PS00962">
    <property type="entry name" value="RIBOSOMAL_S2_1"/>
    <property type="match status" value="1"/>
</dbReference>
<reference key="1">
    <citation type="submission" date="2009-01" db="EMBL/GenBank/DDBJ databases">
        <title>Complete sequence of Desulfovibrio desulfuricans subsp. desulfuricans str. ATCC 27774.</title>
        <authorList>
            <consortium name="US DOE Joint Genome Institute"/>
            <person name="Lucas S."/>
            <person name="Copeland A."/>
            <person name="Lapidus A."/>
            <person name="Glavina del Rio T."/>
            <person name="Tice H."/>
            <person name="Bruce D."/>
            <person name="Goodwin L."/>
            <person name="Pitluck S."/>
            <person name="Sims D."/>
            <person name="Lu M."/>
            <person name="Kiss H."/>
            <person name="Meineke L."/>
            <person name="Brettin T."/>
            <person name="Detter J.C."/>
            <person name="Han C."/>
            <person name="Larimer F."/>
            <person name="Land M."/>
            <person name="Hauser L."/>
            <person name="Kyrpides N."/>
            <person name="Ovchinnikova G."/>
            <person name="Hazen T.C."/>
        </authorList>
    </citation>
    <scope>NUCLEOTIDE SEQUENCE [LARGE SCALE GENOMIC DNA]</scope>
    <source>
        <strain>ATCC 27774 / DSM 6949 / MB</strain>
    </source>
</reference>
<keyword id="KW-0687">Ribonucleoprotein</keyword>
<keyword id="KW-0689">Ribosomal protein</keyword>
<name>RS2_DESDA</name>
<feature type="chain" id="PRO_1000132641" description="Small ribosomal subunit protein uS2">
    <location>
        <begin position="1"/>
        <end position="258"/>
    </location>
</feature>
<feature type="region of interest" description="Disordered" evidence="2">
    <location>
        <begin position="234"/>
        <end position="258"/>
    </location>
</feature>
<feature type="compositionally biased region" description="Low complexity" evidence="2">
    <location>
        <begin position="236"/>
        <end position="258"/>
    </location>
</feature>
<gene>
    <name evidence="1" type="primary">rpsB</name>
    <name type="ordered locus">Ddes_0346</name>
</gene>
<organism>
    <name type="scientific">Desulfovibrio desulfuricans (strain ATCC 27774 / DSM 6949 / MB)</name>
    <dbReference type="NCBI Taxonomy" id="525146"/>
    <lineage>
        <taxon>Bacteria</taxon>
        <taxon>Pseudomonadati</taxon>
        <taxon>Thermodesulfobacteriota</taxon>
        <taxon>Desulfovibrionia</taxon>
        <taxon>Desulfovibrionales</taxon>
        <taxon>Desulfovibrionaceae</taxon>
        <taxon>Desulfovibrio</taxon>
    </lineage>
</organism>
<evidence type="ECO:0000255" key="1">
    <source>
        <dbReference type="HAMAP-Rule" id="MF_00291"/>
    </source>
</evidence>
<evidence type="ECO:0000256" key="2">
    <source>
        <dbReference type="SAM" id="MobiDB-lite"/>
    </source>
</evidence>
<evidence type="ECO:0000305" key="3"/>
<proteinExistence type="inferred from homology"/>
<accession>B8J3M5</accession>
<sequence length="258" mass="28595">MAYVSMKQMLETGVHFGHQTRRWNPKMRPYIFGARNGIHIIDLQQTVKLFRIAHDKVVDIVAKGGKVLFIGTKRQAQEAVAAEAGRAGQFFVTNRWMGGTLTNFVTIQKSVDRLKKLESMFADGSINRYQKKEILLLERELAKLEETLGGIKNMDRLPQIAFIIDPHREDIAVKECRKLGIPIIAVTDTNCDPDVIDYIIPGNDDAIRAIKLFVAAFAEACMEGEAMGKDHKGETANAEEAMQKAAAVEAAAEAAPAQ</sequence>
<protein>
    <recommendedName>
        <fullName evidence="1">Small ribosomal subunit protein uS2</fullName>
    </recommendedName>
    <alternativeName>
        <fullName evidence="3">30S ribosomal protein S2</fullName>
    </alternativeName>
</protein>